<gene>
    <name evidence="1" type="primary">argJ</name>
    <name type="ordered locus">Pro_0054</name>
</gene>
<reference key="1">
    <citation type="journal article" date="2003" name="Proc. Natl. Acad. Sci. U.S.A.">
        <title>Genome sequence of the cyanobacterium Prochlorococcus marinus SS120, a nearly minimal oxyphototrophic genome.</title>
        <authorList>
            <person name="Dufresne A."/>
            <person name="Salanoubat M."/>
            <person name="Partensky F."/>
            <person name="Artiguenave F."/>
            <person name="Axmann I.M."/>
            <person name="Barbe V."/>
            <person name="Duprat S."/>
            <person name="Galperin M.Y."/>
            <person name="Koonin E.V."/>
            <person name="Le Gall F."/>
            <person name="Makarova K.S."/>
            <person name="Ostrowski M."/>
            <person name="Oztas S."/>
            <person name="Robert C."/>
            <person name="Rogozin I.B."/>
            <person name="Scanlan D.J."/>
            <person name="Tandeau de Marsac N."/>
            <person name="Weissenbach J."/>
            <person name="Wincker P."/>
            <person name="Wolf Y.I."/>
            <person name="Hess W.R."/>
        </authorList>
    </citation>
    <scope>NUCLEOTIDE SEQUENCE [LARGE SCALE GENOMIC DNA]</scope>
    <source>
        <strain>SARG / CCMP1375 / SS120</strain>
    </source>
</reference>
<name>ARGJ_PROMA</name>
<organism>
    <name type="scientific">Prochlorococcus marinus (strain SARG / CCMP1375 / SS120)</name>
    <dbReference type="NCBI Taxonomy" id="167539"/>
    <lineage>
        <taxon>Bacteria</taxon>
        <taxon>Bacillati</taxon>
        <taxon>Cyanobacteriota</taxon>
        <taxon>Cyanophyceae</taxon>
        <taxon>Synechococcales</taxon>
        <taxon>Prochlorococcaceae</taxon>
        <taxon>Prochlorococcus</taxon>
    </lineage>
</organism>
<feature type="chain" id="PRO_0000002207" description="Arginine biosynthesis bifunctional protein ArgJ alpha chain" evidence="1">
    <location>
        <begin position="1"/>
        <end position="196"/>
    </location>
</feature>
<feature type="chain" id="PRO_0000002208" description="Arginine biosynthesis bifunctional protein ArgJ beta chain" evidence="1">
    <location>
        <begin position="197"/>
        <end position="413"/>
    </location>
</feature>
<feature type="active site" description="Nucleophile" evidence="1">
    <location>
        <position position="197"/>
    </location>
</feature>
<feature type="binding site" evidence="1">
    <location>
        <position position="160"/>
    </location>
    <ligand>
        <name>substrate</name>
    </ligand>
</feature>
<feature type="binding site" evidence="1">
    <location>
        <position position="186"/>
    </location>
    <ligand>
        <name>substrate</name>
    </ligand>
</feature>
<feature type="binding site" evidence="1">
    <location>
        <position position="197"/>
    </location>
    <ligand>
        <name>substrate</name>
    </ligand>
</feature>
<feature type="binding site" evidence="1">
    <location>
        <position position="277"/>
    </location>
    <ligand>
        <name>substrate</name>
    </ligand>
</feature>
<feature type="binding site" evidence="1">
    <location>
        <position position="408"/>
    </location>
    <ligand>
        <name>substrate</name>
    </ligand>
</feature>
<feature type="binding site" evidence="1">
    <location>
        <position position="413"/>
    </location>
    <ligand>
        <name>substrate</name>
    </ligand>
</feature>
<feature type="site" description="Involved in the stabilization of negative charge on the oxyanion by the formation of the oxyanion hole" evidence="1">
    <location>
        <position position="123"/>
    </location>
</feature>
<feature type="site" description="Involved in the stabilization of negative charge on the oxyanion by the formation of the oxyanion hole" evidence="1">
    <location>
        <position position="124"/>
    </location>
</feature>
<feature type="site" description="Cleavage; by autolysis" evidence="1">
    <location>
        <begin position="196"/>
        <end position="197"/>
    </location>
</feature>
<proteinExistence type="inferred from homology"/>
<accession>Q7VEF9</accession>
<protein>
    <recommendedName>
        <fullName evidence="1">Arginine biosynthesis bifunctional protein ArgJ</fullName>
    </recommendedName>
    <domain>
        <recommendedName>
            <fullName evidence="1">Glutamate N-acetyltransferase</fullName>
            <ecNumber evidence="1">2.3.1.35</ecNumber>
        </recommendedName>
        <alternativeName>
            <fullName evidence="1">Ornithine acetyltransferase</fullName>
            <shortName evidence="1">OATase</shortName>
        </alternativeName>
        <alternativeName>
            <fullName evidence="1">Ornithine transacetylase</fullName>
        </alternativeName>
    </domain>
    <domain>
        <recommendedName>
            <fullName evidence="1">Amino-acid acetyltransferase</fullName>
            <ecNumber evidence="1">2.3.1.1</ecNumber>
        </recommendedName>
        <alternativeName>
            <fullName evidence="1">N-acetylglutamate synthase</fullName>
            <shortName evidence="1">AGSase</shortName>
        </alternativeName>
    </domain>
    <component>
        <recommendedName>
            <fullName evidence="1">Arginine biosynthesis bifunctional protein ArgJ alpha chain</fullName>
        </recommendedName>
    </component>
    <component>
        <recommendedName>
            <fullName evidence="1">Arginine biosynthesis bifunctional protein ArgJ beta chain</fullName>
        </recommendedName>
    </component>
</protein>
<dbReference type="EC" id="2.3.1.35" evidence="1"/>
<dbReference type="EC" id="2.3.1.1" evidence="1"/>
<dbReference type="EMBL" id="AE017126">
    <property type="protein sequence ID" value="AAP99100.1"/>
    <property type="molecule type" value="Genomic_DNA"/>
</dbReference>
<dbReference type="RefSeq" id="NP_874448.1">
    <property type="nucleotide sequence ID" value="NC_005042.1"/>
</dbReference>
<dbReference type="RefSeq" id="WP_011124209.1">
    <property type="nucleotide sequence ID" value="NC_005042.1"/>
</dbReference>
<dbReference type="SMR" id="Q7VEF9"/>
<dbReference type="STRING" id="167539.Pro_0054"/>
<dbReference type="MEROPS" id="T05.002"/>
<dbReference type="EnsemblBacteria" id="AAP99100">
    <property type="protein sequence ID" value="AAP99100"/>
    <property type="gene ID" value="Pro_0054"/>
</dbReference>
<dbReference type="KEGG" id="pma:Pro_0054"/>
<dbReference type="PATRIC" id="fig|167539.5.peg.57"/>
<dbReference type="eggNOG" id="COG1364">
    <property type="taxonomic scope" value="Bacteria"/>
</dbReference>
<dbReference type="HOGENOM" id="CLU_027172_1_0_3"/>
<dbReference type="OrthoDB" id="9804242at2"/>
<dbReference type="UniPathway" id="UPA00068">
    <property type="reaction ID" value="UER00106"/>
</dbReference>
<dbReference type="UniPathway" id="UPA00068">
    <property type="reaction ID" value="UER00111"/>
</dbReference>
<dbReference type="Proteomes" id="UP000001420">
    <property type="component" value="Chromosome"/>
</dbReference>
<dbReference type="GO" id="GO:0005737">
    <property type="term" value="C:cytoplasm"/>
    <property type="evidence" value="ECO:0007669"/>
    <property type="project" value="UniProtKB-SubCell"/>
</dbReference>
<dbReference type="GO" id="GO:0004358">
    <property type="term" value="F:glutamate N-acetyltransferase activity"/>
    <property type="evidence" value="ECO:0007669"/>
    <property type="project" value="UniProtKB-UniRule"/>
</dbReference>
<dbReference type="GO" id="GO:0004042">
    <property type="term" value="F:L-glutamate N-acetyltransferase activity"/>
    <property type="evidence" value="ECO:0007669"/>
    <property type="project" value="UniProtKB-UniRule"/>
</dbReference>
<dbReference type="GO" id="GO:0006526">
    <property type="term" value="P:L-arginine biosynthetic process"/>
    <property type="evidence" value="ECO:0007669"/>
    <property type="project" value="UniProtKB-UniRule"/>
</dbReference>
<dbReference type="GO" id="GO:0006592">
    <property type="term" value="P:ornithine biosynthetic process"/>
    <property type="evidence" value="ECO:0007669"/>
    <property type="project" value="TreeGrafter"/>
</dbReference>
<dbReference type="CDD" id="cd02152">
    <property type="entry name" value="OAT"/>
    <property type="match status" value="1"/>
</dbReference>
<dbReference type="FunFam" id="3.60.70.12:FF:000001">
    <property type="entry name" value="Arginine biosynthesis bifunctional protein ArgJ, chloroplastic"/>
    <property type="match status" value="1"/>
</dbReference>
<dbReference type="Gene3D" id="3.10.20.340">
    <property type="entry name" value="ArgJ beta chain, C-terminal domain"/>
    <property type="match status" value="1"/>
</dbReference>
<dbReference type="Gene3D" id="3.60.70.12">
    <property type="entry name" value="L-amino peptidase D-ALA esterase/amidase"/>
    <property type="match status" value="1"/>
</dbReference>
<dbReference type="HAMAP" id="MF_01106">
    <property type="entry name" value="ArgJ"/>
    <property type="match status" value="1"/>
</dbReference>
<dbReference type="InterPro" id="IPR002813">
    <property type="entry name" value="Arg_biosynth_ArgJ"/>
</dbReference>
<dbReference type="InterPro" id="IPR016117">
    <property type="entry name" value="ArgJ-like_dom_sf"/>
</dbReference>
<dbReference type="InterPro" id="IPR042195">
    <property type="entry name" value="ArgJ_beta_C"/>
</dbReference>
<dbReference type="NCBIfam" id="TIGR00120">
    <property type="entry name" value="ArgJ"/>
    <property type="match status" value="1"/>
</dbReference>
<dbReference type="NCBIfam" id="NF003802">
    <property type="entry name" value="PRK05388.1"/>
    <property type="match status" value="1"/>
</dbReference>
<dbReference type="PANTHER" id="PTHR23100">
    <property type="entry name" value="ARGININE BIOSYNTHESIS BIFUNCTIONAL PROTEIN ARGJ"/>
    <property type="match status" value="1"/>
</dbReference>
<dbReference type="PANTHER" id="PTHR23100:SF0">
    <property type="entry name" value="ARGININE BIOSYNTHESIS BIFUNCTIONAL PROTEIN ARGJ, MITOCHONDRIAL"/>
    <property type="match status" value="1"/>
</dbReference>
<dbReference type="Pfam" id="PF01960">
    <property type="entry name" value="ArgJ"/>
    <property type="match status" value="1"/>
</dbReference>
<dbReference type="SUPFAM" id="SSF56266">
    <property type="entry name" value="DmpA/ArgJ-like"/>
    <property type="match status" value="1"/>
</dbReference>
<sequence>MSFFQSSKWSLIAGGITAPSGFKASGVSAGLKPSKKLDLALLVTSPNAQCSGTFTQSFVRAKCINLCLERLSKTAGKVRAVLVNSGHANACTGNRGIDDSLIATRALAEKLDLLEEEVLICSTGVIGEPIPMQKLLKGLDPLVMNLSKEGGSDAAKAILTTDLIEKEIAIEGYLGDRLIRIGGMAKGSGMIHPNMATMLGFLTCDAGLPKDVWDAMIDRVVDCSFNAISVDGDTSTNDSFLAFAQGDILDSQHFNELEIGLKLVSTYLAQSIVRDGEGANCLFEVKVKGTSKIAHAQIIARQICSSCLVKTAIHGCDPNWGRILSAAGSTGIPFSLDEVSIWIGSFQVMSNGQPVEFNRKLVIRYMKEIIKGNNASDEKLIISLVVGRSEIEAIAWGCDLSSEYIHINADYTT</sequence>
<comment type="function">
    <text evidence="1">Catalyzes two activities which are involved in the cyclic version of arginine biosynthesis: the synthesis of N-acetylglutamate from glutamate and acetyl-CoA as the acetyl donor, and of ornithine by transacetylation between N(2)-acetylornithine and glutamate.</text>
</comment>
<comment type="catalytic activity">
    <reaction evidence="1">
        <text>N(2)-acetyl-L-ornithine + L-glutamate = N-acetyl-L-glutamate + L-ornithine</text>
        <dbReference type="Rhea" id="RHEA:15349"/>
        <dbReference type="ChEBI" id="CHEBI:29985"/>
        <dbReference type="ChEBI" id="CHEBI:44337"/>
        <dbReference type="ChEBI" id="CHEBI:46911"/>
        <dbReference type="ChEBI" id="CHEBI:57805"/>
        <dbReference type="EC" id="2.3.1.35"/>
    </reaction>
</comment>
<comment type="catalytic activity">
    <reaction evidence="1">
        <text>L-glutamate + acetyl-CoA = N-acetyl-L-glutamate + CoA + H(+)</text>
        <dbReference type="Rhea" id="RHEA:24292"/>
        <dbReference type="ChEBI" id="CHEBI:15378"/>
        <dbReference type="ChEBI" id="CHEBI:29985"/>
        <dbReference type="ChEBI" id="CHEBI:44337"/>
        <dbReference type="ChEBI" id="CHEBI:57287"/>
        <dbReference type="ChEBI" id="CHEBI:57288"/>
        <dbReference type="EC" id="2.3.1.1"/>
    </reaction>
</comment>
<comment type="pathway">
    <text evidence="1">Amino-acid biosynthesis; L-arginine biosynthesis; L-ornithine and N-acetyl-L-glutamate from L-glutamate and N(2)-acetyl-L-ornithine (cyclic): step 1/1.</text>
</comment>
<comment type="pathway">
    <text evidence="1">Amino-acid biosynthesis; L-arginine biosynthesis; N(2)-acetyl-L-ornithine from L-glutamate: step 1/4.</text>
</comment>
<comment type="subunit">
    <text evidence="1">Heterotetramer of two alpha and two beta chains.</text>
</comment>
<comment type="subcellular location">
    <subcellularLocation>
        <location evidence="1">Cytoplasm</location>
    </subcellularLocation>
</comment>
<comment type="similarity">
    <text evidence="1">Belongs to the ArgJ family.</text>
</comment>
<keyword id="KW-0012">Acyltransferase</keyword>
<keyword id="KW-0028">Amino-acid biosynthesis</keyword>
<keyword id="KW-0055">Arginine biosynthesis</keyword>
<keyword id="KW-0068">Autocatalytic cleavage</keyword>
<keyword id="KW-0963">Cytoplasm</keyword>
<keyword id="KW-0511">Multifunctional enzyme</keyword>
<keyword id="KW-1185">Reference proteome</keyword>
<keyword id="KW-0808">Transferase</keyword>
<evidence type="ECO:0000255" key="1">
    <source>
        <dbReference type="HAMAP-Rule" id="MF_01106"/>
    </source>
</evidence>